<keyword id="KW-0328">Glycosyltransferase</keyword>
<keyword id="KW-0479">Metal-binding</keyword>
<keyword id="KW-0671">Queuosine biosynthesis</keyword>
<keyword id="KW-0808">Transferase</keyword>
<keyword id="KW-0819">tRNA processing</keyword>
<keyword id="KW-0862">Zinc</keyword>
<feature type="chain" id="PRO_0000135526" description="Queuine tRNA-ribosyltransferase">
    <location>
        <begin position="1"/>
        <end position="379"/>
    </location>
</feature>
<feature type="region of interest" description="RNA binding" evidence="1">
    <location>
        <begin position="249"/>
        <end position="255"/>
    </location>
</feature>
<feature type="region of interest" description="RNA binding; important for wobble base 34 recognition" evidence="1">
    <location>
        <begin position="273"/>
        <end position="277"/>
    </location>
</feature>
<feature type="active site" description="Proton acceptor" evidence="1">
    <location>
        <position position="94"/>
    </location>
</feature>
<feature type="active site" description="Nucleophile" evidence="1">
    <location>
        <position position="268"/>
    </location>
</feature>
<feature type="binding site" evidence="1">
    <location>
        <begin position="94"/>
        <end position="98"/>
    </location>
    <ligand>
        <name>substrate</name>
    </ligand>
</feature>
<feature type="binding site" evidence="1">
    <location>
        <position position="148"/>
    </location>
    <ligand>
        <name>substrate</name>
    </ligand>
</feature>
<feature type="binding site" evidence="1">
    <location>
        <position position="191"/>
    </location>
    <ligand>
        <name>substrate</name>
    </ligand>
</feature>
<feature type="binding site" evidence="1">
    <location>
        <position position="218"/>
    </location>
    <ligand>
        <name>substrate</name>
    </ligand>
</feature>
<feature type="binding site" evidence="1">
    <location>
        <position position="306"/>
    </location>
    <ligand>
        <name>Zn(2+)</name>
        <dbReference type="ChEBI" id="CHEBI:29105"/>
    </ligand>
</feature>
<feature type="binding site" evidence="1">
    <location>
        <position position="308"/>
    </location>
    <ligand>
        <name>Zn(2+)</name>
        <dbReference type="ChEBI" id="CHEBI:29105"/>
    </ligand>
</feature>
<feature type="binding site" evidence="1">
    <location>
        <position position="311"/>
    </location>
    <ligand>
        <name>Zn(2+)</name>
        <dbReference type="ChEBI" id="CHEBI:29105"/>
    </ligand>
</feature>
<feature type="binding site" evidence="1">
    <location>
        <position position="337"/>
    </location>
    <ligand>
        <name>Zn(2+)</name>
        <dbReference type="ChEBI" id="CHEBI:29105"/>
    </ligand>
</feature>
<organism>
    <name type="scientific">Staphylococcus aureus (strain MSSA476)</name>
    <dbReference type="NCBI Taxonomy" id="282459"/>
    <lineage>
        <taxon>Bacteria</taxon>
        <taxon>Bacillati</taxon>
        <taxon>Bacillota</taxon>
        <taxon>Bacilli</taxon>
        <taxon>Bacillales</taxon>
        <taxon>Staphylococcaceae</taxon>
        <taxon>Staphylococcus</taxon>
    </lineage>
</organism>
<accession>Q6G8T0</accession>
<protein>
    <recommendedName>
        <fullName evidence="1">Queuine tRNA-ribosyltransferase</fullName>
        <ecNumber evidence="1">2.4.2.29</ecNumber>
    </recommendedName>
    <alternativeName>
        <fullName evidence="1">Guanine insertion enzyme</fullName>
    </alternativeName>
    <alternativeName>
        <fullName evidence="1">tRNA-guanine transglycosylase</fullName>
    </alternativeName>
</protein>
<proteinExistence type="inferred from homology"/>
<dbReference type="EC" id="2.4.2.29" evidence="1"/>
<dbReference type="EMBL" id="BX571857">
    <property type="protein sequence ID" value="CAG43376.1"/>
    <property type="molecule type" value="Genomic_DNA"/>
</dbReference>
<dbReference type="RefSeq" id="WP_001112045.1">
    <property type="nucleotide sequence ID" value="NC_002953.3"/>
</dbReference>
<dbReference type="SMR" id="Q6G8T0"/>
<dbReference type="KEGG" id="sas:SAS1575"/>
<dbReference type="HOGENOM" id="CLU_022060_0_1_9"/>
<dbReference type="UniPathway" id="UPA00392"/>
<dbReference type="GO" id="GO:0005829">
    <property type="term" value="C:cytosol"/>
    <property type="evidence" value="ECO:0007669"/>
    <property type="project" value="TreeGrafter"/>
</dbReference>
<dbReference type="GO" id="GO:0046872">
    <property type="term" value="F:metal ion binding"/>
    <property type="evidence" value="ECO:0007669"/>
    <property type="project" value="UniProtKB-KW"/>
</dbReference>
<dbReference type="GO" id="GO:0008479">
    <property type="term" value="F:tRNA-guanosine(34) queuine transglycosylase activity"/>
    <property type="evidence" value="ECO:0007669"/>
    <property type="project" value="UniProtKB-UniRule"/>
</dbReference>
<dbReference type="GO" id="GO:0008616">
    <property type="term" value="P:queuosine biosynthetic process"/>
    <property type="evidence" value="ECO:0007669"/>
    <property type="project" value="UniProtKB-UniRule"/>
</dbReference>
<dbReference type="GO" id="GO:0002099">
    <property type="term" value="P:tRNA wobble guanine modification"/>
    <property type="evidence" value="ECO:0007669"/>
    <property type="project" value="TreeGrafter"/>
</dbReference>
<dbReference type="GO" id="GO:0101030">
    <property type="term" value="P:tRNA-guanine transglycosylation"/>
    <property type="evidence" value="ECO:0007669"/>
    <property type="project" value="InterPro"/>
</dbReference>
<dbReference type="FunFam" id="3.20.20.105:FF:000001">
    <property type="entry name" value="Queuine tRNA-ribosyltransferase"/>
    <property type="match status" value="1"/>
</dbReference>
<dbReference type="Gene3D" id="3.20.20.105">
    <property type="entry name" value="Queuine tRNA-ribosyltransferase-like"/>
    <property type="match status" value="1"/>
</dbReference>
<dbReference type="HAMAP" id="MF_00168">
    <property type="entry name" value="Q_tRNA_Tgt"/>
    <property type="match status" value="1"/>
</dbReference>
<dbReference type="InterPro" id="IPR050076">
    <property type="entry name" value="ArchSynthase1/Queuine_TRR"/>
</dbReference>
<dbReference type="InterPro" id="IPR004803">
    <property type="entry name" value="TGT"/>
</dbReference>
<dbReference type="InterPro" id="IPR036511">
    <property type="entry name" value="TGT-like_sf"/>
</dbReference>
<dbReference type="InterPro" id="IPR002616">
    <property type="entry name" value="tRNA_ribo_trans-like"/>
</dbReference>
<dbReference type="NCBIfam" id="TIGR00430">
    <property type="entry name" value="Q_tRNA_tgt"/>
    <property type="match status" value="1"/>
</dbReference>
<dbReference type="NCBIfam" id="TIGR00449">
    <property type="entry name" value="tgt_general"/>
    <property type="match status" value="1"/>
</dbReference>
<dbReference type="PANTHER" id="PTHR46499">
    <property type="entry name" value="QUEUINE TRNA-RIBOSYLTRANSFERASE"/>
    <property type="match status" value="1"/>
</dbReference>
<dbReference type="PANTHER" id="PTHR46499:SF1">
    <property type="entry name" value="QUEUINE TRNA-RIBOSYLTRANSFERASE"/>
    <property type="match status" value="1"/>
</dbReference>
<dbReference type="Pfam" id="PF01702">
    <property type="entry name" value="TGT"/>
    <property type="match status" value="1"/>
</dbReference>
<dbReference type="SUPFAM" id="SSF51713">
    <property type="entry name" value="tRNA-guanine transglycosylase"/>
    <property type="match status" value="1"/>
</dbReference>
<sequence>MPAVTYEHIKTCKQSGARLGIVHTPHGSFETPMFMPVGTKATVKTMSPEELRQIEAKIILGNTYHLWLQPGNDIIKHAGGLHKFMNWDGPILTDSGGFQVFSLSNLRKITEEGVEFRHHTNGSKLFLSPEKSMQIQNDLGSDIMMAFDECPPMPAEYDYVKKSIERTTRWAKRCLDAHQRPEDQALFGIIQGGEYEDLREQSAKDLVELDFPGYAIGGLSVGEPKPVMYKMVEHTEQFMPKDKPRYLMGVGSPDALIECSIRGMDMFDCVLPTRIARNGTCMTSQGRLVIKNAKFADDLRPLDENCDCYTCQNYSRAYIRHLIKAEETFGIRLTTIHNLHFLLKLMEDIRQAIREDRLLDFKEEFFEQYGLNVENPKNF</sequence>
<gene>
    <name evidence="1" type="primary">tgt</name>
    <name type="ordered locus">SAS1575</name>
</gene>
<evidence type="ECO:0000255" key="1">
    <source>
        <dbReference type="HAMAP-Rule" id="MF_00168"/>
    </source>
</evidence>
<comment type="function">
    <text evidence="1">Catalyzes the base-exchange of a guanine (G) residue with the queuine precursor 7-aminomethyl-7-deazaguanine (PreQ1) at position 34 (anticodon wobble position) in tRNAs with GU(N) anticodons (tRNA-Asp, -Asn, -His and -Tyr). Catalysis occurs through a double-displacement mechanism. The nucleophile active site attacks the C1' of nucleotide 34 to detach the guanine base from the RNA, forming a covalent enzyme-RNA intermediate. The proton acceptor active site deprotonates the incoming PreQ1, allowing a nucleophilic attack on the C1' of the ribose to form the product. After dissociation, two additional enzymatic reactions on the tRNA convert PreQ1 to queuine (Q), resulting in the hypermodified nucleoside queuosine (7-(((4,5-cis-dihydroxy-2-cyclopenten-1-yl)amino)methyl)-7-deazaguanosine).</text>
</comment>
<comment type="catalytic activity">
    <reaction evidence="1">
        <text>7-aminomethyl-7-carbaguanine + guanosine(34) in tRNA = 7-aminomethyl-7-carbaguanosine(34) in tRNA + guanine</text>
        <dbReference type="Rhea" id="RHEA:24104"/>
        <dbReference type="Rhea" id="RHEA-COMP:10341"/>
        <dbReference type="Rhea" id="RHEA-COMP:10342"/>
        <dbReference type="ChEBI" id="CHEBI:16235"/>
        <dbReference type="ChEBI" id="CHEBI:58703"/>
        <dbReference type="ChEBI" id="CHEBI:74269"/>
        <dbReference type="ChEBI" id="CHEBI:82833"/>
        <dbReference type="EC" id="2.4.2.29"/>
    </reaction>
</comment>
<comment type="cofactor">
    <cofactor evidence="1">
        <name>Zn(2+)</name>
        <dbReference type="ChEBI" id="CHEBI:29105"/>
    </cofactor>
    <text evidence="1">Binds 1 zinc ion per subunit.</text>
</comment>
<comment type="pathway">
    <text evidence="1">tRNA modification; tRNA-queuosine biosynthesis.</text>
</comment>
<comment type="subunit">
    <text evidence="1">Homodimer. Within each dimer, one monomer is responsible for RNA recognition and catalysis, while the other monomer binds to the replacement base PreQ1.</text>
</comment>
<comment type="similarity">
    <text evidence="1">Belongs to the queuine tRNA-ribosyltransferase family.</text>
</comment>
<reference key="1">
    <citation type="journal article" date="2004" name="Proc. Natl. Acad. Sci. U.S.A.">
        <title>Complete genomes of two clinical Staphylococcus aureus strains: evidence for the rapid evolution of virulence and drug resistance.</title>
        <authorList>
            <person name="Holden M.T.G."/>
            <person name="Feil E.J."/>
            <person name="Lindsay J.A."/>
            <person name="Peacock S.J."/>
            <person name="Day N.P.J."/>
            <person name="Enright M.C."/>
            <person name="Foster T.J."/>
            <person name="Moore C.E."/>
            <person name="Hurst L."/>
            <person name="Atkin R."/>
            <person name="Barron A."/>
            <person name="Bason N."/>
            <person name="Bentley S.D."/>
            <person name="Chillingworth C."/>
            <person name="Chillingworth T."/>
            <person name="Churcher C."/>
            <person name="Clark L."/>
            <person name="Corton C."/>
            <person name="Cronin A."/>
            <person name="Doggett J."/>
            <person name="Dowd L."/>
            <person name="Feltwell T."/>
            <person name="Hance Z."/>
            <person name="Harris B."/>
            <person name="Hauser H."/>
            <person name="Holroyd S."/>
            <person name="Jagels K."/>
            <person name="James K.D."/>
            <person name="Lennard N."/>
            <person name="Line A."/>
            <person name="Mayes R."/>
            <person name="Moule S."/>
            <person name="Mungall K."/>
            <person name="Ormond D."/>
            <person name="Quail M.A."/>
            <person name="Rabbinowitsch E."/>
            <person name="Rutherford K.M."/>
            <person name="Sanders M."/>
            <person name="Sharp S."/>
            <person name="Simmonds M."/>
            <person name="Stevens K."/>
            <person name="Whitehead S."/>
            <person name="Barrell B.G."/>
            <person name="Spratt B.G."/>
            <person name="Parkhill J."/>
        </authorList>
    </citation>
    <scope>NUCLEOTIDE SEQUENCE [LARGE SCALE GENOMIC DNA]</scope>
    <source>
        <strain>MSSA476</strain>
    </source>
</reference>
<name>TGT_STAAS</name>